<reference key="1">
    <citation type="journal article" date="1991" name="Eur. J. Biochem.">
        <title>Sorbitol dehydrogenase: cDNA coding for the rat enzyme. Variations within the alcohol dehydrogenase family independent of quaternary structure and metal content.</title>
        <authorList>
            <person name="Karlsson C."/>
            <person name="Joernvall H."/>
            <person name="Heoeog J.O."/>
        </authorList>
    </citation>
    <scope>NUCLEOTIDE SEQUENCE [MRNA]</scope>
    <source>
        <tissue>Liver</tissue>
    </source>
</reference>
<reference key="2">
    <citation type="journal article" date="1993" name="Eur. J. Biochem.">
        <title>Sorbitol dehydrogenase. Full-length cDNA sequencing reveals a mRNA coding for a protein containing an additional 42 amino acids at the N-terminal end.</title>
        <authorList>
            <person name="Wen Y."/>
            <person name="Bekhor I."/>
        </authorList>
    </citation>
    <scope>NUCLEOTIDE SEQUENCE [MRNA]</scope>
    <source>
        <strain>Sprague-Dawley</strain>
        <tissue>Testis</tissue>
    </source>
</reference>
<reference key="3">
    <citation type="journal article" date="2004" name="Genome Res.">
        <title>The status, quality, and expansion of the NIH full-length cDNA project: the Mammalian Gene Collection (MGC).</title>
        <authorList>
            <consortium name="The MGC Project Team"/>
        </authorList>
    </citation>
    <scope>NUCLEOTIDE SEQUENCE [LARGE SCALE MRNA]</scope>
    <source>
        <tissue>Embryonic liver</tissue>
        <tissue>Liver</tissue>
        <tissue>Testis</tissue>
    </source>
</reference>
<reference key="4">
    <citation type="journal article" date="1983" name="Int. J. Biochem.">
        <title>Kinetic analysis of rat liver sorbitol dehydrogenase.</title>
        <authorList>
            <person name="Leissing N.C."/>
            <person name="McGuinness E.T."/>
        </authorList>
    </citation>
    <scope>FUNCTION</scope>
    <scope>CATALYTIC ACTIVITY</scope>
    <scope>BIOPHYSICOCHEMICAL PROPERTIES</scope>
    <scope>ACTIVITY REGULATION</scope>
    <scope>SUBUNIT</scope>
    <scope>TISSUE SPECIFICITY</scope>
</reference>
<reference key="5">
    <citation type="journal article" date="2012" name="Nat. Commun.">
        <title>Quantitative maps of protein phosphorylation sites across 14 different rat organs and tissues.</title>
        <authorList>
            <person name="Lundby A."/>
            <person name="Secher A."/>
            <person name="Lage K."/>
            <person name="Nordsborg N.B."/>
            <person name="Dmytriyev A."/>
            <person name="Lundby C."/>
            <person name="Olsen J.V."/>
        </authorList>
    </citation>
    <scope>PHOSPHORYLATION [LARGE SCALE ANALYSIS] AT SER-169</scope>
    <scope>IDENTIFICATION BY MASS SPECTROMETRY [LARGE SCALE ANALYSIS]</scope>
</reference>
<reference key="6">
    <citation type="journal article" date="2001" name="Chem. Biol. Interact.">
        <title>Crystal structure of sorbitol dehydrogenase.</title>
        <authorList>
            <person name="Johansson K."/>
            <person name="El-Ahmad M."/>
            <person name="Kaiser C."/>
            <person name="Joernvall H."/>
            <person name="Eklund H."/>
            <person name="Hoeoeg J."/>
            <person name="Ramaswamy S."/>
        </authorList>
    </citation>
    <scope>X-RAY CRYSTALLOGRAPHY (3.1 ANGSTROMS) IN COMPLEX WITH ZINC AND NAD(+)</scope>
    <scope>COFACTOR</scope>
    <scope>SUBUNIT</scope>
    <scope>DOMAIN</scope>
</reference>
<protein>
    <recommendedName>
        <fullName evidence="9 10">Sorbitol dehydrogenase</fullName>
        <shortName evidence="9">SDH</shortName>
        <ecNumber evidence="7">1.1.1.-</ecNumber>
    </recommendedName>
    <alternativeName>
        <fullName>L-iditol 2-dehydrogenase</fullName>
        <ecNumber evidence="1">1.1.1.14</ecNumber>
    </alternativeName>
    <alternativeName>
        <fullName evidence="11">Polyol dehydrogenase</fullName>
    </alternativeName>
    <alternativeName>
        <fullName>Xylitol dehydrogenase</fullName>
        <shortName>XDH</shortName>
        <ecNumber evidence="1">1.1.1.9</ecNumber>
    </alternativeName>
</protein>
<comment type="function">
    <text evidence="2 7">Polyol dehydrogenase that catalyzes the reversible NAD(+)-dependent oxidation of various sugar alcohols (By similarity). Is active with D-sorbitol (D-glucitol) leading to the C2-oxidized product D-fructose (PubMed:6862079). Is a key enzyme in the polyol pathway that interconverts glucose and fructose via sorbitol, which constitutes an important alternate route for glucose metabolism. May play a role in sperm motility by using sorbitol as an alternative energy source for sperm motility (By similarity).</text>
</comment>
<comment type="catalytic activity">
    <reaction evidence="7">
        <text>keto-D-fructose + NADH + H(+) = D-sorbitol + NAD(+)</text>
        <dbReference type="Rhea" id="RHEA:33031"/>
        <dbReference type="ChEBI" id="CHEBI:15378"/>
        <dbReference type="ChEBI" id="CHEBI:17924"/>
        <dbReference type="ChEBI" id="CHEBI:48095"/>
        <dbReference type="ChEBI" id="CHEBI:57540"/>
        <dbReference type="ChEBI" id="CHEBI:57945"/>
    </reaction>
</comment>
<comment type="catalytic activity">
    <reaction evidence="1">
        <text>xylitol + NAD(+) = D-xylulose + NADH + H(+)</text>
        <dbReference type="Rhea" id="RHEA:20433"/>
        <dbReference type="ChEBI" id="CHEBI:15378"/>
        <dbReference type="ChEBI" id="CHEBI:17140"/>
        <dbReference type="ChEBI" id="CHEBI:17151"/>
        <dbReference type="ChEBI" id="CHEBI:57540"/>
        <dbReference type="ChEBI" id="CHEBI:57945"/>
        <dbReference type="EC" id="1.1.1.9"/>
    </reaction>
</comment>
<comment type="catalytic activity">
    <reaction evidence="1">
        <text>L-iditol + NAD(+) = keto-L-sorbose + NADH + H(+)</text>
        <dbReference type="Rhea" id="RHEA:10160"/>
        <dbReference type="ChEBI" id="CHEBI:13172"/>
        <dbReference type="ChEBI" id="CHEBI:15378"/>
        <dbReference type="ChEBI" id="CHEBI:18202"/>
        <dbReference type="ChEBI" id="CHEBI:57540"/>
        <dbReference type="ChEBI" id="CHEBI:57945"/>
        <dbReference type="EC" id="1.1.1.14"/>
    </reaction>
</comment>
<comment type="cofactor">
    <cofactor evidence="4">
        <name>Zn(2+)</name>
        <dbReference type="ChEBI" id="CHEBI:29105"/>
    </cofactor>
    <text evidence="4">Binds 1 zinc ion per subunit.</text>
</comment>
<comment type="biophysicochemical properties">
    <kinetics>
        <KM evidence="7">0.38 mM for sorbitol</KM>
        <KM evidence="7">0.082 mM for NAD(+)</KM>
        <KM evidence="7">136 mM for D-fructose</KM>
        <KM evidence="7">67 uM for NADH</KM>
        <Vmax evidence="7">0.229 umol/min/mg enzyme for sorbitol oxidation</Vmax>
        <Vmax evidence="7">5.84 umol/min/mg enzyme for D-fructose reduction</Vmax>
        <text>kcat is 8 sec(-1) for sorbitol oxidation and 190 sec(-1) for D-fructose reduction.</text>
    </kinetics>
</comment>
<comment type="subunit">
    <text evidence="4">Homotetramer; dimer of dimers.</text>
</comment>
<comment type="subcellular location">
    <subcellularLocation>
        <location evidence="3">Mitochondrion membrane</location>
        <topology evidence="3">Peripheral membrane protein</topology>
    </subcellularLocation>
    <subcellularLocation>
        <location evidence="3">Cell projection</location>
        <location evidence="3">Cilium</location>
        <location evidence="3">Flagellum</location>
    </subcellularLocation>
    <text evidence="3">Associated with mitochondria of the midpiece and near the plasma membrane in the principal piece of the flagellum. Also found in the epididymosome, secreted by the epididymal epithelium and that transfers proteins from the epididymal fluid to the sperm surface.</text>
</comment>
<comment type="tissue specificity">
    <text evidence="5 6 7 8">Expressed in liver and testis.</text>
</comment>
<comment type="domain">
    <text evidence="4">Consists of two distinct domains, a catalytic domain and a coenzyme-binding domain.</text>
</comment>
<comment type="similarity">
    <text evidence="11">Belongs to the zinc-containing alcohol dehydrogenase family.</text>
</comment>
<comment type="caution">
    <text evidence="11">PubMed:8223590 reports a cDNA predicted to encode a protein with an extended N-terminus but there is no further evidence for the existence of such a protein.</text>
</comment>
<comment type="sequence caution" evidence="11">
    <conflict type="erroneous initiation">
        <sequence resource="EMBL-CDS" id="CAA52670"/>
    </conflict>
    <text>Extended N-terminus.</text>
</comment>
<accession>P27867</accession>
<accession>A2VCV9</accession>
<accession>Q4FZY4</accession>
<accession>Q5I0F3</accession>
<name>DHSO_RAT</name>
<organism>
    <name type="scientific">Rattus norvegicus</name>
    <name type="common">Rat</name>
    <dbReference type="NCBI Taxonomy" id="10116"/>
    <lineage>
        <taxon>Eukaryota</taxon>
        <taxon>Metazoa</taxon>
        <taxon>Chordata</taxon>
        <taxon>Craniata</taxon>
        <taxon>Vertebrata</taxon>
        <taxon>Euteleostomi</taxon>
        <taxon>Mammalia</taxon>
        <taxon>Eutheria</taxon>
        <taxon>Euarchontoglires</taxon>
        <taxon>Glires</taxon>
        <taxon>Rodentia</taxon>
        <taxon>Myomorpha</taxon>
        <taxon>Muroidea</taxon>
        <taxon>Muridae</taxon>
        <taxon>Murinae</taxon>
        <taxon>Rattus</taxon>
    </lineage>
</organism>
<gene>
    <name type="primary">Sord</name>
    <name type="synonym">Sdh1</name>
</gene>
<dbReference type="EC" id="1.1.1.-" evidence="7"/>
<dbReference type="EC" id="1.1.1.14" evidence="1"/>
<dbReference type="EC" id="1.1.1.9" evidence="1"/>
<dbReference type="EMBL" id="X59037">
    <property type="protein sequence ID" value="CAA41761.1"/>
    <property type="molecule type" value="mRNA"/>
</dbReference>
<dbReference type="EMBL" id="X74593">
    <property type="protein sequence ID" value="CAA52670.1"/>
    <property type="status" value="ALT_INIT"/>
    <property type="molecule type" value="mRNA"/>
</dbReference>
<dbReference type="EMBL" id="BC088398">
    <property type="protein sequence ID" value="AAH88398.2"/>
    <property type="molecule type" value="mRNA"/>
</dbReference>
<dbReference type="EMBL" id="BC098919">
    <property type="protein sequence ID" value="AAH98919.2"/>
    <property type="molecule type" value="mRNA"/>
</dbReference>
<dbReference type="EMBL" id="BC128707">
    <property type="protein sequence ID" value="AAI28708.2"/>
    <property type="molecule type" value="mRNA"/>
</dbReference>
<dbReference type="PIR" id="S38363">
    <property type="entry name" value="S16132"/>
</dbReference>
<dbReference type="RefSeq" id="NP_058748.2">
    <property type="nucleotide sequence ID" value="NM_017052.2"/>
</dbReference>
<dbReference type="SMR" id="P27867"/>
<dbReference type="FunCoup" id="P27867">
    <property type="interactions" value="1096"/>
</dbReference>
<dbReference type="STRING" id="10116.ENSRNOP00000023350"/>
<dbReference type="BindingDB" id="P27867"/>
<dbReference type="ChEMBL" id="CHEMBL4038"/>
<dbReference type="iPTMnet" id="P27867"/>
<dbReference type="PhosphoSitePlus" id="P27867"/>
<dbReference type="jPOST" id="P27867"/>
<dbReference type="PaxDb" id="10116-ENSRNOP00000023350"/>
<dbReference type="GeneID" id="24788"/>
<dbReference type="KEGG" id="rno:24788"/>
<dbReference type="UCSC" id="RGD:3734">
    <property type="organism name" value="rat"/>
</dbReference>
<dbReference type="AGR" id="RGD:3734"/>
<dbReference type="CTD" id="6652"/>
<dbReference type="RGD" id="3734">
    <property type="gene designation" value="Sord"/>
</dbReference>
<dbReference type="VEuPathDB" id="HostDB:ENSRNOG00000017291"/>
<dbReference type="eggNOG" id="KOG0024">
    <property type="taxonomic scope" value="Eukaryota"/>
</dbReference>
<dbReference type="HOGENOM" id="CLU_026673_11_5_1"/>
<dbReference type="InParanoid" id="P27867"/>
<dbReference type="OrthoDB" id="30790at9989"/>
<dbReference type="PhylomeDB" id="P27867"/>
<dbReference type="TreeFam" id="TF313060"/>
<dbReference type="Reactome" id="R-RNO-5652227">
    <property type="pathway name" value="Fructose biosynthesis"/>
</dbReference>
<dbReference type="Reactome" id="R-RNO-5661270">
    <property type="pathway name" value="Formation of xylulose-5-phosphate"/>
</dbReference>
<dbReference type="SABIO-RK" id="P27867"/>
<dbReference type="PRO" id="PR:P27867"/>
<dbReference type="Proteomes" id="UP000002494">
    <property type="component" value="Chromosome 3"/>
</dbReference>
<dbReference type="Bgee" id="ENSRNOG00000017291">
    <property type="expression patterns" value="Expressed in adult mammalian kidney and 19 other cell types or tissues"/>
</dbReference>
<dbReference type="GO" id="GO:0005829">
    <property type="term" value="C:cytosol"/>
    <property type="evidence" value="ECO:0000266"/>
    <property type="project" value="RGD"/>
</dbReference>
<dbReference type="GO" id="GO:0070062">
    <property type="term" value="C:extracellular exosome"/>
    <property type="evidence" value="ECO:0000266"/>
    <property type="project" value="RGD"/>
</dbReference>
<dbReference type="GO" id="GO:0016020">
    <property type="term" value="C:membrane"/>
    <property type="evidence" value="ECO:0000266"/>
    <property type="project" value="RGD"/>
</dbReference>
<dbReference type="GO" id="GO:0031966">
    <property type="term" value="C:mitochondrial membrane"/>
    <property type="evidence" value="ECO:0007669"/>
    <property type="project" value="UniProtKB-SubCell"/>
</dbReference>
<dbReference type="GO" id="GO:0005739">
    <property type="term" value="C:mitochondrion"/>
    <property type="evidence" value="ECO:0000266"/>
    <property type="project" value="RGD"/>
</dbReference>
<dbReference type="GO" id="GO:0031514">
    <property type="term" value="C:motile cilium"/>
    <property type="evidence" value="ECO:0000250"/>
    <property type="project" value="UniProtKB"/>
</dbReference>
<dbReference type="GO" id="GO:0047833">
    <property type="term" value="F:D-sorbitol dehydrogenase (acceptor) activity"/>
    <property type="evidence" value="ECO:0000266"/>
    <property type="project" value="RGD"/>
</dbReference>
<dbReference type="GO" id="GO:0046526">
    <property type="term" value="F:D-xylulose reductase activity"/>
    <property type="evidence" value="ECO:0000266"/>
    <property type="project" value="RGD"/>
</dbReference>
<dbReference type="GO" id="GO:0042802">
    <property type="term" value="F:identical protein binding"/>
    <property type="evidence" value="ECO:0000314"/>
    <property type="project" value="RGD"/>
</dbReference>
<dbReference type="GO" id="GO:0003939">
    <property type="term" value="F:L-iditol 2-dehydrogenase (NAD+) activity"/>
    <property type="evidence" value="ECO:0000266"/>
    <property type="project" value="RGD"/>
</dbReference>
<dbReference type="GO" id="GO:0051287">
    <property type="term" value="F:NAD binding"/>
    <property type="evidence" value="ECO:0000266"/>
    <property type="project" value="RGD"/>
</dbReference>
<dbReference type="GO" id="GO:0008270">
    <property type="term" value="F:zinc ion binding"/>
    <property type="evidence" value="ECO:0000314"/>
    <property type="project" value="RGD"/>
</dbReference>
<dbReference type="GO" id="GO:0019640">
    <property type="term" value="P:D-glucuronate catabolic process to D-xylulose 5-phosphate"/>
    <property type="evidence" value="ECO:0000266"/>
    <property type="project" value="RGD"/>
</dbReference>
<dbReference type="GO" id="GO:0030317">
    <property type="term" value="P:flagellated sperm motility"/>
    <property type="evidence" value="ECO:0000250"/>
    <property type="project" value="UniProtKB"/>
</dbReference>
<dbReference type="GO" id="GO:0046370">
    <property type="term" value="P:fructose biosynthetic process"/>
    <property type="evidence" value="ECO:0000266"/>
    <property type="project" value="RGD"/>
</dbReference>
<dbReference type="GO" id="GO:0046686">
    <property type="term" value="P:response to cadmium ion"/>
    <property type="evidence" value="ECO:0000314"/>
    <property type="project" value="RGD"/>
</dbReference>
<dbReference type="GO" id="GO:0046688">
    <property type="term" value="P:response to copper ion"/>
    <property type="evidence" value="ECO:0000314"/>
    <property type="project" value="RGD"/>
</dbReference>
<dbReference type="GO" id="GO:0009725">
    <property type="term" value="P:response to hormone"/>
    <property type="evidence" value="ECO:0000314"/>
    <property type="project" value="RGD"/>
</dbReference>
<dbReference type="GO" id="GO:0031667">
    <property type="term" value="P:response to nutrient levels"/>
    <property type="evidence" value="ECO:0000270"/>
    <property type="project" value="RGD"/>
</dbReference>
<dbReference type="GO" id="GO:0009410">
    <property type="term" value="P:response to xenobiotic stimulus"/>
    <property type="evidence" value="ECO:0000270"/>
    <property type="project" value="RGD"/>
</dbReference>
<dbReference type="GO" id="GO:0006062">
    <property type="term" value="P:sorbitol catabolic process"/>
    <property type="evidence" value="ECO:0000266"/>
    <property type="project" value="RGD"/>
</dbReference>
<dbReference type="GO" id="GO:0006060">
    <property type="term" value="P:sorbitol metabolic process"/>
    <property type="evidence" value="ECO:0000266"/>
    <property type="project" value="RGD"/>
</dbReference>
<dbReference type="GO" id="GO:0051160">
    <property type="term" value="P:xylitol catabolic process"/>
    <property type="evidence" value="ECO:0000266"/>
    <property type="project" value="RGD"/>
</dbReference>
<dbReference type="GO" id="GO:0051164">
    <property type="term" value="P:xylitol metabolic process"/>
    <property type="evidence" value="ECO:0000266"/>
    <property type="project" value="RGD"/>
</dbReference>
<dbReference type="CDD" id="cd05285">
    <property type="entry name" value="sorbitol_DH"/>
    <property type="match status" value="1"/>
</dbReference>
<dbReference type="FunFam" id="3.40.50.720:FF:000068">
    <property type="entry name" value="Sorbitol dehydrogenase"/>
    <property type="match status" value="1"/>
</dbReference>
<dbReference type="Gene3D" id="3.90.180.10">
    <property type="entry name" value="Medium-chain alcohol dehydrogenases, catalytic domain"/>
    <property type="match status" value="1"/>
</dbReference>
<dbReference type="Gene3D" id="3.40.50.720">
    <property type="entry name" value="NAD(P)-binding Rossmann-like Domain"/>
    <property type="match status" value="1"/>
</dbReference>
<dbReference type="InterPro" id="IPR013149">
    <property type="entry name" value="ADH-like_C"/>
</dbReference>
<dbReference type="InterPro" id="IPR013154">
    <property type="entry name" value="ADH-like_N"/>
</dbReference>
<dbReference type="InterPro" id="IPR002328">
    <property type="entry name" value="ADH_Zn_CS"/>
</dbReference>
<dbReference type="InterPro" id="IPR011032">
    <property type="entry name" value="GroES-like_sf"/>
</dbReference>
<dbReference type="InterPro" id="IPR036291">
    <property type="entry name" value="NAD(P)-bd_dom_sf"/>
</dbReference>
<dbReference type="InterPro" id="IPR020843">
    <property type="entry name" value="PKS_ER"/>
</dbReference>
<dbReference type="InterPro" id="IPR045306">
    <property type="entry name" value="SDH-like"/>
</dbReference>
<dbReference type="PANTHER" id="PTHR43161">
    <property type="entry name" value="SORBITOL DEHYDROGENASE"/>
    <property type="match status" value="1"/>
</dbReference>
<dbReference type="PANTHER" id="PTHR43161:SF9">
    <property type="entry name" value="SORBITOL DEHYDROGENASE"/>
    <property type="match status" value="1"/>
</dbReference>
<dbReference type="Pfam" id="PF08240">
    <property type="entry name" value="ADH_N"/>
    <property type="match status" value="1"/>
</dbReference>
<dbReference type="Pfam" id="PF00107">
    <property type="entry name" value="ADH_zinc_N"/>
    <property type="match status" value="1"/>
</dbReference>
<dbReference type="SMART" id="SM00829">
    <property type="entry name" value="PKS_ER"/>
    <property type="match status" value="1"/>
</dbReference>
<dbReference type="SUPFAM" id="SSF50129">
    <property type="entry name" value="GroES-like"/>
    <property type="match status" value="1"/>
</dbReference>
<dbReference type="SUPFAM" id="SSF51735">
    <property type="entry name" value="NAD(P)-binding Rossmann-fold domains"/>
    <property type="match status" value="1"/>
</dbReference>
<dbReference type="PROSITE" id="PS00059">
    <property type="entry name" value="ADH_ZINC"/>
    <property type="match status" value="1"/>
</dbReference>
<proteinExistence type="evidence at protein level"/>
<evidence type="ECO:0000250" key="1">
    <source>
        <dbReference type="UniProtKB" id="P07846"/>
    </source>
</evidence>
<evidence type="ECO:0000250" key="2">
    <source>
        <dbReference type="UniProtKB" id="Q00796"/>
    </source>
</evidence>
<evidence type="ECO:0000250" key="3">
    <source>
        <dbReference type="UniProtKB" id="Q64442"/>
    </source>
</evidence>
<evidence type="ECO:0000269" key="4">
    <source>
    </source>
</evidence>
<evidence type="ECO:0000269" key="5">
    <source>
    </source>
</evidence>
<evidence type="ECO:0000269" key="6">
    <source>
    </source>
</evidence>
<evidence type="ECO:0000269" key="7">
    <source>
    </source>
</evidence>
<evidence type="ECO:0000269" key="8">
    <source>
    </source>
</evidence>
<evidence type="ECO:0000303" key="9">
    <source>
    </source>
</evidence>
<evidence type="ECO:0000303" key="10">
    <source>
    </source>
</evidence>
<evidence type="ECO:0000305" key="11"/>
<evidence type="ECO:0000305" key="12">
    <source>
    </source>
</evidence>
<evidence type="ECO:0007744" key="13">
    <source>
    </source>
</evidence>
<keyword id="KW-0007">Acetylation</keyword>
<keyword id="KW-0966">Cell projection</keyword>
<keyword id="KW-0969">Cilium</keyword>
<keyword id="KW-0282">Flagellum</keyword>
<keyword id="KW-0472">Membrane</keyword>
<keyword id="KW-0479">Metal-binding</keyword>
<keyword id="KW-0496">Mitochondrion</keyword>
<keyword id="KW-0520">NAD</keyword>
<keyword id="KW-0560">Oxidoreductase</keyword>
<keyword id="KW-0597">Phosphoprotein</keyword>
<keyword id="KW-1185">Reference proteome</keyword>
<keyword id="KW-0862">Zinc</keyword>
<sequence>MAAPAKGENLSLVVHGPGDIRLENYPIPELGPNDVLLKMHSVGICGSDVHYWEHGRIGDFVVKKPMVLGHEAAGTVTKVGPMVKHLKPGDRVAIEPGVPREIDEFCKIGRYNLTPSIFFCATPPDDGNLCRFYKHSADFCYKLPDSVTFEEGALIEPLSVGIYACRRGSVSLGNKVLVCGAGPIGIVTLLVAKAMGASQVVVIDLSASRLAKAKEVGADFTIQVAKETPHDIAKKVESVLGSKPEVTIECTGAESSVQTGIYATHSGGTLVVVGMGPEMINLPLVHAAVREVDIKGVFRYCNTWPMAVSMLASKTLNVKPLVTHRFPLEKAVEAFETAKKGLGLKVMIKCDPNDQNP</sequence>
<feature type="initiator methionine" description="Removed" evidence="2">
    <location>
        <position position="1"/>
    </location>
</feature>
<feature type="chain" id="PRO_0000000884" description="Sorbitol dehydrogenase">
    <location>
        <begin position="2"/>
        <end position="357"/>
    </location>
</feature>
<feature type="binding site" evidence="4">
    <location>
        <position position="45"/>
    </location>
    <ligand>
        <name>Zn(2+)</name>
        <dbReference type="ChEBI" id="CHEBI:29105"/>
        <note>catalytic</note>
    </ligand>
</feature>
<feature type="binding site" evidence="1 12">
    <location>
        <position position="51"/>
    </location>
    <ligand>
        <name>substrate</name>
    </ligand>
</feature>
<feature type="binding site" evidence="4">
    <location>
        <position position="70"/>
    </location>
    <ligand>
        <name>Zn(2+)</name>
        <dbReference type="ChEBI" id="CHEBI:29105"/>
        <note>catalytic</note>
    </ligand>
</feature>
<feature type="binding site" evidence="4">
    <location>
        <position position="71"/>
    </location>
    <ligand>
        <name>Zn(2+)</name>
        <dbReference type="ChEBI" id="CHEBI:29105"/>
        <note>catalytic</note>
    </ligand>
</feature>
<feature type="binding site" evidence="1 12">
    <location>
        <position position="156"/>
    </location>
    <ligand>
        <name>substrate</name>
    </ligand>
</feature>
<feature type="binding site" evidence="4">
    <location>
        <position position="156"/>
    </location>
    <ligand>
        <name>Zn(2+)</name>
        <dbReference type="ChEBI" id="CHEBI:29105"/>
        <note>catalytic</note>
    </ligand>
</feature>
<feature type="binding site" evidence="2">
    <location>
        <position position="184"/>
    </location>
    <ligand>
        <name>NAD(+)</name>
        <dbReference type="ChEBI" id="CHEBI:57540"/>
    </ligand>
</feature>
<feature type="binding site" evidence="4">
    <location>
        <position position="204"/>
    </location>
    <ligand>
        <name>NAD(+)</name>
        <dbReference type="ChEBI" id="CHEBI:57540"/>
    </ligand>
</feature>
<feature type="binding site" evidence="4">
    <location>
        <position position="209"/>
    </location>
    <ligand>
        <name>NAD(+)</name>
        <dbReference type="ChEBI" id="CHEBI:57540"/>
    </ligand>
</feature>
<feature type="binding site" evidence="4">
    <location>
        <begin position="273"/>
        <end position="275"/>
    </location>
    <ligand>
        <name>NAD(+)</name>
        <dbReference type="ChEBI" id="CHEBI:57540"/>
    </ligand>
</feature>
<feature type="binding site" evidence="4">
    <location>
        <begin position="297"/>
        <end position="299"/>
    </location>
    <ligand>
        <name>NAD(+)</name>
        <dbReference type="ChEBI" id="CHEBI:57540"/>
    </ligand>
</feature>
<feature type="binding site" evidence="1 12">
    <location>
        <position position="299"/>
    </location>
    <ligand>
        <name>substrate</name>
    </ligand>
</feature>
<feature type="binding site" evidence="1 12">
    <location>
        <position position="300"/>
    </location>
    <ligand>
        <name>substrate</name>
    </ligand>
</feature>
<feature type="modified residue" description="N-acetylalanine" evidence="2">
    <location>
        <position position="2"/>
    </location>
</feature>
<feature type="modified residue" description="Phosphoserine" evidence="13">
    <location>
        <position position="169"/>
    </location>
</feature>
<feature type="sequence conflict" description="In Ref. 1; CAA41761." evidence="11" ref="1">
    <original>T</original>
    <variation>D</variation>
    <location>
        <position position="259"/>
    </location>
</feature>